<proteinExistence type="inferred from homology"/>
<keyword id="KW-0963">Cytoplasm</keyword>
<keyword id="KW-0488">Methylation</keyword>
<keyword id="KW-1185">Reference proteome</keyword>
<keyword id="KW-0687">Ribonucleoprotein</keyword>
<keyword id="KW-0689">Ribosomal protein</keyword>
<evidence type="ECO:0000250" key="1">
    <source>
        <dbReference type="UniProtKB" id="Q969Q0"/>
    </source>
</evidence>
<evidence type="ECO:0000256" key="2">
    <source>
        <dbReference type="SAM" id="MobiDB-lite"/>
    </source>
</evidence>
<evidence type="ECO:0000305" key="3"/>
<organism>
    <name type="scientific">Pongo abelii</name>
    <name type="common">Sumatran orangutan</name>
    <name type="synonym">Pongo pygmaeus abelii</name>
    <dbReference type="NCBI Taxonomy" id="9601"/>
    <lineage>
        <taxon>Eukaryota</taxon>
        <taxon>Metazoa</taxon>
        <taxon>Chordata</taxon>
        <taxon>Craniata</taxon>
        <taxon>Vertebrata</taxon>
        <taxon>Euteleostomi</taxon>
        <taxon>Mammalia</taxon>
        <taxon>Eutheria</taxon>
        <taxon>Euarchontoglires</taxon>
        <taxon>Primates</taxon>
        <taxon>Haplorrhini</taxon>
        <taxon>Catarrhini</taxon>
        <taxon>Hominidae</taxon>
        <taxon>Pongo</taxon>
    </lineage>
</organism>
<gene>
    <name type="primary">RPL36AL</name>
</gene>
<accession>Q5R9D2</accession>
<dbReference type="EMBL" id="CR859457">
    <property type="protein sequence ID" value="CAH91628.1"/>
    <property type="molecule type" value="mRNA"/>
</dbReference>
<dbReference type="RefSeq" id="NP_001125957.1">
    <property type="nucleotide sequence ID" value="NM_001132485.1"/>
</dbReference>
<dbReference type="SMR" id="Q5R9D2"/>
<dbReference type="STRING" id="9601.ENSPPYP00000006579"/>
<dbReference type="GeneID" id="100172892"/>
<dbReference type="KEGG" id="pon:100172892"/>
<dbReference type="CTD" id="6166"/>
<dbReference type="eggNOG" id="KOG3464">
    <property type="taxonomic scope" value="Eukaryota"/>
</dbReference>
<dbReference type="InParanoid" id="Q5R9D2"/>
<dbReference type="OrthoDB" id="2967263at2759"/>
<dbReference type="Proteomes" id="UP000001595">
    <property type="component" value="Unplaced"/>
</dbReference>
<dbReference type="GO" id="GO:0005737">
    <property type="term" value="C:cytoplasm"/>
    <property type="evidence" value="ECO:0007669"/>
    <property type="project" value="UniProtKB-SubCell"/>
</dbReference>
<dbReference type="GO" id="GO:1990904">
    <property type="term" value="C:ribonucleoprotein complex"/>
    <property type="evidence" value="ECO:0007669"/>
    <property type="project" value="UniProtKB-KW"/>
</dbReference>
<dbReference type="GO" id="GO:0005840">
    <property type="term" value="C:ribosome"/>
    <property type="evidence" value="ECO:0007669"/>
    <property type="project" value="UniProtKB-KW"/>
</dbReference>
<dbReference type="GO" id="GO:0003735">
    <property type="term" value="F:structural constituent of ribosome"/>
    <property type="evidence" value="ECO:0007669"/>
    <property type="project" value="InterPro"/>
</dbReference>
<dbReference type="GO" id="GO:0006412">
    <property type="term" value="P:translation"/>
    <property type="evidence" value="ECO:0007669"/>
    <property type="project" value="InterPro"/>
</dbReference>
<dbReference type="FunFam" id="3.10.450.80:FF:000001">
    <property type="entry name" value="60S ribosomal protein L44"/>
    <property type="match status" value="1"/>
</dbReference>
<dbReference type="Gene3D" id="3.10.450.80">
    <property type="match status" value="1"/>
</dbReference>
<dbReference type="InterPro" id="IPR000552">
    <property type="entry name" value="Ribosomal_eL44"/>
</dbReference>
<dbReference type="InterPro" id="IPR053708">
    <property type="entry name" value="Ribosomal_LSU_eL42"/>
</dbReference>
<dbReference type="InterPro" id="IPR011332">
    <property type="entry name" value="Ribosomal_zn-bd"/>
</dbReference>
<dbReference type="PANTHER" id="PTHR10369">
    <property type="entry name" value="60S RIBOSOMAL PROTEIN L36A/L44"/>
    <property type="match status" value="1"/>
</dbReference>
<dbReference type="Pfam" id="PF00935">
    <property type="entry name" value="Ribosomal_L44"/>
    <property type="match status" value="1"/>
</dbReference>
<dbReference type="SUPFAM" id="SSF57829">
    <property type="entry name" value="Zn-binding ribosomal proteins"/>
    <property type="match status" value="1"/>
</dbReference>
<dbReference type="PROSITE" id="PS01172">
    <property type="entry name" value="RIBOSOMAL_L44E"/>
    <property type="match status" value="1"/>
</dbReference>
<comment type="subcellular location">
    <subcellularLocation>
        <location evidence="3">Cytoplasm</location>
    </subcellularLocation>
</comment>
<comment type="similarity">
    <text evidence="3">Belongs to the eukaryotic ribosomal protein eL42 family.</text>
</comment>
<sequence length="106" mass="12497">MVNVPKTRRTFCKKCGKHQPHKVTQYKKGKDSLYAQGRRRYDRKRSGYGGQTKPIFRKKAKTTKKIVLRLECVEPNCRSKRMLAIKRCKHFELGGDKKRKGQVIQF</sequence>
<feature type="chain" id="PRO_0000149119" description="Large ribosomal subunit protein eL42">
    <location>
        <begin position="1"/>
        <end position="106"/>
    </location>
</feature>
<feature type="region of interest" description="Disordered" evidence="2">
    <location>
        <begin position="34"/>
        <end position="53"/>
    </location>
</feature>
<feature type="modified residue" description="N6-methyllysine" evidence="1">
    <location>
        <position position="53"/>
    </location>
</feature>
<name>RL36L_PONAB</name>
<protein>
    <recommendedName>
        <fullName evidence="3">Large ribosomal subunit protein eL42</fullName>
    </recommendedName>
    <alternativeName>
        <fullName>60S ribosomal protein L36a-like</fullName>
    </alternativeName>
</protein>
<reference key="1">
    <citation type="submission" date="2004-11" db="EMBL/GenBank/DDBJ databases">
        <authorList>
            <consortium name="The German cDNA consortium"/>
        </authorList>
    </citation>
    <scope>NUCLEOTIDE SEQUENCE [LARGE SCALE MRNA]</scope>
    <source>
        <tissue>Kidney</tissue>
    </source>
</reference>